<comment type="function">
    <text evidence="1">Specifically dimethylates two adjacent adenosines (A1518 and A1519) in the loop of a conserved hairpin near the 3'-end of 16S rRNA in the 30S particle. May play a critical role in biogenesis of 30S subunits.</text>
</comment>
<comment type="catalytic activity">
    <reaction evidence="1">
        <text>adenosine(1518)/adenosine(1519) in 16S rRNA + 4 S-adenosyl-L-methionine = N(6)-dimethyladenosine(1518)/N(6)-dimethyladenosine(1519) in 16S rRNA + 4 S-adenosyl-L-homocysteine + 4 H(+)</text>
        <dbReference type="Rhea" id="RHEA:19609"/>
        <dbReference type="Rhea" id="RHEA-COMP:10232"/>
        <dbReference type="Rhea" id="RHEA-COMP:10233"/>
        <dbReference type="ChEBI" id="CHEBI:15378"/>
        <dbReference type="ChEBI" id="CHEBI:57856"/>
        <dbReference type="ChEBI" id="CHEBI:59789"/>
        <dbReference type="ChEBI" id="CHEBI:74411"/>
        <dbReference type="ChEBI" id="CHEBI:74493"/>
        <dbReference type="EC" id="2.1.1.182"/>
    </reaction>
</comment>
<comment type="subcellular location">
    <subcellularLocation>
        <location evidence="1">Cytoplasm</location>
    </subcellularLocation>
</comment>
<comment type="similarity">
    <text evidence="1">Belongs to the class I-like SAM-binding methyltransferase superfamily. rRNA adenine N(6)-methyltransferase family. RsmA subfamily.</text>
</comment>
<protein>
    <recommendedName>
        <fullName evidence="1">Ribosomal RNA small subunit methyltransferase A</fullName>
        <ecNumber evidence="1">2.1.1.182</ecNumber>
    </recommendedName>
    <alternativeName>
        <fullName evidence="1">16S rRNA (adenine(1518)-N(6)/adenine(1519)-N(6))-dimethyltransferase</fullName>
    </alternativeName>
    <alternativeName>
        <fullName evidence="1">16S rRNA dimethyladenosine transferase</fullName>
    </alternativeName>
    <alternativeName>
        <fullName evidence="1">16S rRNA dimethylase</fullName>
    </alternativeName>
    <alternativeName>
        <fullName evidence="1">S-adenosylmethionine-6-N', N'-adenosyl(rRNA) dimethyltransferase</fullName>
    </alternativeName>
</protein>
<name>RSMA_STRT1</name>
<proteinExistence type="inferred from homology"/>
<dbReference type="EC" id="2.1.1.182" evidence="1"/>
<dbReference type="EMBL" id="CP000024">
    <property type="protein sequence ID" value="AAV63315.1"/>
    <property type="molecule type" value="Genomic_DNA"/>
</dbReference>
<dbReference type="RefSeq" id="WP_011227569.1">
    <property type="nucleotide sequence ID" value="NC_006449.1"/>
</dbReference>
<dbReference type="SMR" id="Q5LY12"/>
<dbReference type="KEGG" id="stc:str1799"/>
<dbReference type="HOGENOM" id="CLU_041220_0_0_9"/>
<dbReference type="GO" id="GO:0005829">
    <property type="term" value="C:cytosol"/>
    <property type="evidence" value="ECO:0007669"/>
    <property type="project" value="TreeGrafter"/>
</dbReference>
<dbReference type="GO" id="GO:0052908">
    <property type="term" value="F:16S rRNA (adenine(1518)-N(6)/adenine(1519)-N(6))-dimethyltransferase activity"/>
    <property type="evidence" value="ECO:0007669"/>
    <property type="project" value="UniProtKB-EC"/>
</dbReference>
<dbReference type="GO" id="GO:0003723">
    <property type="term" value="F:RNA binding"/>
    <property type="evidence" value="ECO:0007669"/>
    <property type="project" value="UniProtKB-KW"/>
</dbReference>
<dbReference type="CDD" id="cd02440">
    <property type="entry name" value="AdoMet_MTases"/>
    <property type="match status" value="1"/>
</dbReference>
<dbReference type="FunFam" id="3.40.50.150:FF:000023">
    <property type="entry name" value="Ribosomal RNA small subunit methyltransferase A"/>
    <property type="match status" value="1"/>
</dbReference>
<dbReference type="Gene3D" id="1.10.8.100">
    <property type="entry name" value="Ribosomal RNA adenine dimethylase-like, domain 2"/>
    <property type="match status" value="1"/>
</dbReference>
<dbReference type="Gene3D" id="3.40.50.150">
    <property type="entry name" value="Vaccinia Virus protein VP39"/>
    <property type="match status" value="1"/>
</dbReference>
<dbReference type="HAMAP" id="MF_00607">
    <property type="entry name" value="16SrRNA_methyltr_A"/>
    <property type="match status" value="1"/>
</dbReference>
<dbReference type="InterPro" id="IPR001737">
    <property type="entry name" value="KsgA/Erm"/>
</dbReference>
<dbReference type="InterPro" id="IPR023165">
    <property type="entry name" value="rRNA_Ade_diMease-like_C"/>
</dbReference>
<dbReference type="InterPro" id="IPR020596">
    <property type="entry name" value="rRNA_Ade_Mease_Trfase_CS"/>
</dbReference>
<dbReference type="InterPro" id="IPR020598">
    <property type="entry name" value="rRNA_Ade_methylase_Trfase_N"/>
</dbReference>
<dbReference type="InterPro" id="IPR011530">
    <property type="entry name" value="rRNA_adenine_dimethylase"/>
</dbReference>
<dbReference type="InterPro" id="IPR029063">
    <property type="entry name" value="SAM-dependent_MTases_sf"/>
</dbReference>
<dbReference type="NCBIfam" id="TIGR00755">
    <property type="entry name" value="ksgA"/>
    <property type="match status" value="1"/>
</dbReference>
<dbReference type="PANTHER" id="PTHR11727">
    <property type="entry name" value="DIMETHYLADENOSINE TRANSFERASE"/>
    <property type="match status" value="1"/>
</dbReference>
<dbReference type="PANTHER" id="PTHR11727:SF7">
    <property type="entry name" value="DIMETHYLADENOSINE TRANSFERASE-RELATED"/>
    <property type="match status" value="1"/>
</dbReference>
<dbReference type="Pfam" id="PF00398">
    <property type="entry name" value="RrnaAD"/>
    <property type="match status" value="1"/>
</dbReference>
<dbReference type="SMART" id="SM00650">
    <property type="entry name" value="rADc"/>
    <property type="match status" value="1"/>
</dbReference>
<dbReference type="SUPFAM" id="SSF53335">
    <property type="entry name" value="S-adenosyl-L-methionine-dependent methyltransferases"/>
    <property type="match status" value="1"/>
</dbReference>
<dbReference type="PROSITE" id="PS01131">
    <property type="entry name" value="RRNA_A_DIMETH"/>
    <property type="match status" value="1"/>
</dbReference>
<dbReference type="PROSITE" id="PS51689">
    <property type="entry name" value="SAM_RNA_A_N6_MT"/>
    <property type="match status" value="1"/>
</dbReference>
<keyword id="KW-0963">Cytoplasm</keyword>
<keyword id="KW-0489">Methyltransferase</keyword>
<keyword id="KW-0694">RNA-binding</keyword>
<keyword id="KW-0698">rRNA processing</keyword>
<keyword id="KW-0949">S-adenosyl-L-methionine</keyword>
<keyword id="KW-0808">Transferase</keyword>
<gene>
    <name evidence="1" type="primary">rsmA</name>
    <name evidence="1" type="synonym">ksgA</name>
    <name type="ordered locus">str1799</name>
</gene>
<organism>
    <name type="scientific">Streptococcus thermophilus (strain CNRZ 1066)</name>
    <dbReference type="NCBI Taxonomy" id="299768"/>
    <lineage>
        <taxon>Bacteria</taxon>
        <taxon>Bacillati</taxon>
        <taxon>Bacillota</taxon>
        <taxon>Bacilli</taxon>
        <taxon>Lactobacillales</taxon>
        <taxon>Streptococcaceae</taxon>
        <taxon>Streptococcus</taxon>
    </lineage>
</organism>
<evidence type="ECO:0000255" key="1">
    <source>
        <dbReference type="HAMAP-Rule" id="MF_00607"/>
    </source>
</evidence>
<reference key="1">
    <citation type="journal article" date="2004" name="Nat. Biotechnol.">
        <title>Complete sequence and comparative genome analysis of the dairy bacterium Streptococcus thermophilus.</title>
        <authorList>
            <person name="Bolotin A."/>
            <person name="Quinquis B."/>
            <person name="Renault P."/>
            <person name="Sorokin A."/>
            <person name="Ehrlich S.D."/>
            <person name="Kulakauskas S."/>
            <person name="Lapidus A."/>
            <person name="Goltsman E."/>
            <person name="Mazur M."/>
            <person name="Pusch G.D."/>
            <person name="Fonstein M."/>
            <person name="Overbeek R."/>
            <person name="Kyprides N."/>
            <person name="Purnelle B."/>
            <person name="Prozzi D."/>
            <person name="Ngui K."/>
            <person name="Masuy D."/>
            <person name="Hancy F."/>
            <person name="Burteau S."/>
            <person name="Boutry M."/>
            <person name="Delcour J."/>
            <person name="Goffeau A."/>
            <person name="Hols P."/>
        </authorList>
    </citation>
    <scope>NUCLEOTIDE SEQUENCE [LARGE SCALE GENOMIC DNA]</scope>
    <source>
        <strain>CNRZ 1066</strain>
    </source>
</reference>
<sequence length="290" mass="32719">MRIADYSVTKAVLERHGFTFKKSFGQNFLTDTNILQKIVDTAEINKNVNVIEIGPGIGALTEFLAENASEVMAFEIDERLVPILEDTLRDHDNVKVINEDVLKADLQTRVKEFENPDLPIKVVANLPYYITTPILMHLIESKIPFSEFVVMMQKEVADRISAEPNTKAYGSLSIAVQYYMTAKVAFAVPRTVFVPAPNVDSAILKMTRRKQPLVEVKDEDFFFRVSKASFLHRRKTLWNNLTSHFGKSEEVKNKLDQALENAAIKPSIRGEALSISDFARLSDALREAGL</sequence>
<accession>Q5LY12</accession>
<feature type="chain" id="PRO_0000101622" description="Ribosomal RNA small subunit methyltransferase A">
    <location>
        <begin position="1"/>
        <end position="290"/>
    </location>
</feature>
<feature type="binding site" evidence="1">
    <location>
        <position position="27"/>
    </location>
    <ligand>
        <name>S-adenosyl-L-methionine</name>
        <dbReference type="ChEBI" id="CHEBI:59789"/>
    </ligand>
</feature>
<feature type="binding site" evidence="1">
    <location>
        <position position="29"/>
    </location>
    <ligand>
        <name>S-adenosyl-L-methionine</name>
        <dbReference type="ChEBI" id="CHEBI:59789"/>
    </ligand>
</feature>
<feature type="binding site" evidence="1">
    <location>
        <position position="54"/>
    </location>
    <ligand>
        <name>S-adenosyl-L-methionine</name>
        <dbReference type="ChEBI" id="CHEBI:59789"/>
    </ligand>
</feature>
<feature type="binding site" evidence="1">
    <location>
        <position position="75"/>
    </location>
    <ligand>
        <name>S-adenosyl-L-methionine</name>
        <dbReference type="ChEBI" id="CHEBI:59789"/>
    </ligand>
</feature>
<feature type="binding site" evidence="1">
    <location>
        <position position="100"/>
    </location>
    <ligand>
        <name>S-adenosyl-L-methionine</name>
        <dbReference type="ChEBI" id="CHEBI:59789"/>
    </ligand>
</feature>
<feature type="binding site" evidence="1">
    <location>
        <position position="125"/>
    </location>
    <ligand>
        <name>S-adenosyl-L-methionine</name>
        <dbReference type="ChEBI" id="CHEBI:59789"/>
    </ligand>
</feature>